<sequence>MPRTHAIEDYRNFGIMAHIDAGKTTTTERILYYTGKSHKIGEVHEGAATMDWMAQEQERGITITSAATTCFWRDKRLNIIDTPGHVDFTIEVERSLRVLDGAVCVLDGNQGVEPQTETVWRQADKYDVPRVVFVNKMDKIGADFFKCVADIIDRVAGKPVCLQLPIGAESSFQGVIDLIKMKAIVWSGEALGANFDETEIPADLKDQAVEYRTKLVEACVELDDDAMSAYLDGNEPDEATMRTLVRKAVQLRAFHPVLCGSAFKNKGVQPLLDAVVDYLPSPADRGEIKGIDFKTEEETVRHPSDSDPFSMLAFKIMDDPHVGTITFCRVYSGKVETGANVLNSSRDKKERVGRMLLMHANNREDIKEAFAGDIVALAGLKDTRTGDTLCDPQKAVILEKMEFPEPVIEIAVEPKSKADQEKLGIALSKLAAEDPSFRVSTDQESGQTILKGMGELHLDIKVDILRRTYKVDANIGQPQVAYREKLTRRQEIDYTHKKQTGGTGQFARVKFVVEPNEPGAGFSFESKIVGGAVPKEYIPGVEKGLNSVLGAGVLAGFPVVDVKVELVDGAYHDVDSSALAFEIASRAAFREALQKGGSVLLEPVMKVEVVSPEEYTGSVIGDLNARRGQIQGQDMRGNANVINAMVPLANMFGYVNQLRSFSQGRANFTMQFDHYEEVPRGEADKVIAKYA</sequence>
<feature type="chain" id="PRO_1000091733" description="Elongation factor G">
    <location>
        <begin position="1"/>
        <end position="691"/>
    </location>
</feature>
<feature type="domain" description="tr-type G">
    <location>
        <begin position="8"/>
        <end position="283"/>
    </location>
</feature>
<feature type="binding site" evidence="1">
    <location>
        <begin position="17"/>
        <end position="24"/>
    </location>
    <ligand>
        <name>GTP</name>
        <dbReference type="ChEBI" id="CHEBI:37565"/>
    </ligand>
</feature>
<feature type="binding site" evidence="1">
    <location>
        <begin position="81"/>
        <end position="85"/>
    </location>
    <ligand>
        <name>GTP</name>
        <dbReference type="ChEBI" id="CHEBI:37565"/>
    </ligand>
</feature>
<feature type="binding site" evidence="1">
    <location>
        <begin position="135"/>
        <end position="138"/>
    </location>
    <ligand>
        <name>GTP</name>
        <dbReference type="ChEBI" id="CHEBI:37565"/>
    </ligand>
</feature>
<evidence type="ECO:0000255" key="1">
    <source>
        <dbReference type="HAMAP-Rule" id="MF_00054"/>
    </source>
</evidence>
<protein>
    <recommendedName>
        <fullName evidence="1">Elongation factor G</fullName>
        <shortName evidence="1">EF-G</shortName>
    </recommendedName>
</protein>
<dbReference type="EMBL" id="CP001001">
    <property type="protein sequence ID" value="ACB24210.1"/>
    <property type="molecule type" value="Genomic_DNA"/>
</dbReference>
<dbReference type="RefSeq" id="WP_012319184.1">
    <property type="nucleotide sequence ID" value="NC_010505.1"/>
</dbReference>
<dbReference type="SMR" id="B1LWS3"/>
<dbReference type="STRING" id="426355.Mrad2831_2215"/>
<dbReference type="GeneID" id="6138247"/>
<dbReference type="KEGG" id="mrd:Mrad2831_2215"/>
<dbReference type="eggNOG" id="COG0480">
    <property type="taxonomic scope" value="Bacteria"/>
</dbReference>
<dbReference type="HOGENOM" id="CLU_002794_4_1_5"/>
<dbReference type="OrthoDB" id="9802948at2"/>
<dbReference type="Proteomes" id="UP000006589">
    <property type="component" value="Chromosome"/>
</dbReference>
<dbReference type="GO" id="GO:0005737">
    <property type="term" value="C:cytoplasm"/>
    <property type="evidence" value="ECO:0007669"/>
    <property type="project" value="UniProtKB-SubCell"/>
</dbReference>
<dbReference type="GO" id="GO:0005525">
    <property type="term" value="F:GTP binding"/>
    <property type="evidence" value="ECO:0007669"/>
    <property type="project" value="UniProtKB-UniRule"/>
</dbReference>
<dbReference type="GO" id="GO:0003924">
    <property type="term" value="F:GTPase activity"/>
    <property type="evidence" value="ECO:0007669"/>
    <property type="project" value="InterPro"/>
</dbReference>
<dbReference type="GO" id="GO:0003746">
    <property type="term" value="F:translation elongation factor activity"/>
    <property type="evidence" value="ECO:0007669"/>
    <property type="project" value="UniProtKB-UniRule"/>
</dbReference>
<dbReference type="GO" id="GO:0032790">
    <property type="term" value="P:ribosome disassembly"/>
    <property type="evidence" value="ECO:0007669"/>
    <property type="project" value="TreeGrafter"/>
</dbReference>
<dbReference type="CDD" id="cd01886">
    <property type="entry name" value="EF-G"/>
    <property type="match status" value="1"/>
</dbReference>
<dbReference type="CDD" id="cd16262">
    <property type="entry name" value="EFG_III"/>
    <property type="match status" value="1"/>
</dbReference>
<dbReference type="CDD" id="cd01434">
    <property type="entry name" value="EFG_mtEFG1_IV"/>
    <property type="match status" value="1"/>
</dbReference>
<dbReference type="CDD" id="cd03713">
    <property type="entry name" value="EFG_mtEFG_C"/>
    <property type="match status" value="1"/>
</dbReference>
<dbReference type="CDD" id="cd04088">
    <property type="entry name" value="EFG_mtEFG_II"/>
    <property type="match status" value="1"/>
</dbReference>
<dbReference type="FunFam" id="2.40.30.10:FF:000006">
    <property type="entry name" value="Elongation factor G"/>
    <property type="match status" value="1"/>
</dbReference>
<dbReference type="FunFam" id="3.30.230.10:FF:000003">
    <property type="entry name" value="Elongation factor G"/>
    <property type="match status" value="1"/>
</dbReference>
<dbReference type="FunFam" id="3.30.70.240:FF:000001">
    <property type="entry name" value="Elongation factor G"/>
    <property type="match status" value="1"/>
</dbReference>
<dbReference type="FunFam" id="3.30.70.870:FF:000001">
    <property type="entry name" value="Elongation factor G"/>
    <property type="match status" value="1"/>
</dbReference>
<dbReference type="FunFam" id="3.40.50.300:FF:000029">
    <property type="entry name" value="Elongation factor G"/>
    <property type="match status" value="1"/>
</dbReference>
<dbReference type="Gene3D" id="3.30.230.10">
    <property type="match status" value="1"/>
</dbReference>
<dbReference type="Gene3D" id="3.30.70.240">
    <property type="match status" value="1"/>
</dbReference>
<dbReference type="Gene3D" id="3.30.70.870">
    <property type="entry name" value="Elongation Factor G (Translational Gtpase), domain 3"/>
    <property type="match status" value="1"/>
</dbReference>
<dbReference type="Gene3D" id="3.40.50.300">
    <property type="entry name" value="P-loop containing nucleotide triphosphate hydrolases"/>
    <property type="match status" value="1"/>
</dbReference>
<dbReference type="Gene3D" id="2.40.30.10">
    <property type="entry name" value="Translation factors"/>
    <property type="match status" value="1"/>
</dbReference>
<dbReference type="HAMAP" id="MF_00054_B">
    <property type="entry name" value="EF_G_EF_2_B"/>
    <property type="match status" value="1"/>
</dbReference>
<dbReference type="InterPro" id="IPR053905">
    <property type="entry name" value="EF-G-like_DII"/>
</dbReference>
<dbReference type="InterPro" id="IPR041095">
    <property type="entry name" value="EFG_II"/>
</dbReference>
<dbReference type="InterPro" id="IPR009022">
    <property type="entry name" value="EFG_III"/>
</dbReference>
<dbReference type="InterPro" id="IPR035647">
    <property type="entry name" value="EFG_III/V"/>
</dbReference>
<dbReference type="InterPro" id="IPR047872">
    <property type="entry name" value="EFG_IV"/>
</dbReference>
<dbReference type="InterPro" id="IPR035649">
    <property type="entry name" value="EFG_V"/>
</dbReference>
<dbReference type="InterPro" id="IPR000640">
    <property type="entry name" value="EFG_V-like"/>
</dbReference>
<dbReference type="InterPro" id="IPR031157">
    <property type="entry name" value="G_TR_CS"/>
</dbReference>
<dbReference type="InterPro" id="IPR027417">
    <property type="entry name" value="P-loop_NTPase"/>
</dbReference>
<dbReference type="InterPro" id="IPR020568">
    <property type="entry name" value="Ribosomal_Su5_D2-typ_SF"/>
</dbReference>
<dbReference type="InterPro" id="IPR014721">
    <property type="entry name" value="Ribsml_uS5_D2-typ_fold_subgr"/>
</dbReference>
<dbReference type="InterPro" id="IPR005225">
    <property type="entry name" value="Small_GTP-bd"/>
</dbReference>
<dbReference type="InterPro" id="IPR000795">
    <property type="entry name" value="T_Tr_GTP-bd_dom"/>
</dbReference>
<dbReference type="InterPro" id="IPR009000">
    <property type="entry name" value="Transl_B-barrel_sf"/>
</dbReference>
<dbReference type="InterPro" id="IPR004540">
    <property type="entry name" value="Transl_elong_EFG/EF2"/>
</dbReference>
<dbReference type="InterPro" id="IPR005517">
    <property type="entry name" value="Transl_elong_EFG/EF2_IV"/>
</dbReference>
<dbReference type="NCBIfam" id="TIGR00484">
    <property type="entry name" value="EF-G"/>
    <property type="match status" value="1"/>
</dbReference>
<dbReference type="NCBIfam" id="NF009379">
    <property type="entry name" value="PRK12740.1-3"/>
    <property type="match status" value="1"/>
</dbReference>
<dbReference type="NCBIfam" id="NF009381">
    <property type="entry name" value="PRK12740.1-5"/>
    <property type="match status" value="1"/>
</dbReference>
<dbReference type="NCBIfam" id="TIGR00231">
    <property type="entry name" value="small_GTP"/>
    <property type="match status" value="1"/>
</dbReference>
<dbReference type="PANTHER" id="PTHR43261:SF1">
    <property type="entry name" value="RIBOSOME-RELEASING FACTOR 2, MITOCHONDRIAL"/>
    <property type="match status" value="1"/>
</dbReference>
<dbReference type="PANTHER" id="PTHR43261">
    <property type="entry name" value="TRANSLATION ELONGATION FACTOR G-RELATED"/>
    <property type="match status" value="1"/>
</dbReference>
<dbReference type="Pfam" id="PF22042">
    <property type="entry name" value="EF-G_D2"/>
    <property type="match status" value="1"/>
</dbReference>
<dbReference type="Pfam" id="PF00679">
    <property type="entry name" value="EFG_C"/>
    <property type="match status" value="1"/>
</dbReference>
<dbReference type="Pfam" id="PF14492">
    <property type="entry name" value="EFG_III"/>
    <property type="match status" value="1"/>
</dbReference>
<dbReference type="Pfam" id="PF03764">
    <property type="entry name" value="EFG_IV"/>
    <property type="match status" value="1"/>
</dbReference>
<dbReference type="Pfam" id="PF00009">
    <property type="entry name" value="GTP_EFTU"/>
    <property type="match status" value="1"/>
</dbReference>
<dbReference type="PRINTS" id="PR00315">
    <property type="entry name" value="ELONGATNFCT"/>
</dbReference>
<dbReference type="SMART" id="SM00838">
    <property type="entry name" value="EFG_C"/>
    <property type="match status" value="1"/>
</dbReference>
<dbReference type="SMART" id="SM00889">
    <property type="entry name" value="EFG_IV"/>
    <property type="match status" value="1"/>
</dbReference>
<dbReference type="SUPFAM" id="SSF54980">
    <property type="entry name" value="EF-G C-terminal domain-like"/>
    <property type="match status" value="2"/>
</dbReference>
<dbReference type="SUPFAM" id="SSF52540">
    <property type="entry name" value="P-loop containing nucleoside triphosphate hydrolases"/>
    <property type="match status" value="1"/>
</dbReference>
<dbReference type="SUPFAM" id="SSF54211">
    <property type="entry name" value="Ribosomal protein S5 domain 2-like"/>
    <property type="match status" value="1"/>
</dbReference>
<dbReference type="SUPFAM" id="SSF50447">
    <property type="entry name" value="Translation proteins"/>
    <property type="match status" value="1"/>
</dbReference>
<dbReference type="PROSITE" id="PS00301">
    <property type="entry name" value="G_TR_1"/>
    <property type="match status" value="1"/>
</dbReference>
<dbReference type="PROSITE" id="PS51722">
    <property type="entry name" value="G_TR_2"/>
    <property type="match status" value="1"/>
</dbReference>
<accession>B1LWS3</accession>
<proteinExistence type="inferred from homology"/>
<keyword id="KW-0963">Cytoplasm</keyword>
<keyword id="KW-0251">Elongation factor</keyword>
<keyword id="KW-0342">GTP-binding</keyword>
<keyword id="KW-0547">Nucleotide-binding</keyword>
<keyword id="KW-0648">Protein biosynthesis</keyword>
<gene>
    <name evidence="1" type="primary">fusA</name>
    <name type="ordered locus">Mrad2831_2215</name>
</gene>
<organism>
    <name type="scientific">Methylobacterium radiotolerans (strain ATCC 27329 / DSM 1819 / JCM 2831 / NBRC 15690 / NCIMB 10815 / 0-1)</name>
    <dbReference type="NCBI Taxonomy" id="426355"/>
    <lineage>
        <taxon>Bacteria</taxon>
        <taxon>Pseudomonadati</taxon>
        <taxon>Pseudomonadota</taxon>
        <taxon>Alphaproteobacteria</taxon>
        <taxon>Hyphomicrobiales</taxon>
        <taxon>Methylobacteriaceae</taxon>
        <taxon>Methylobacterium</taxon>
    </lineage>
</organism>
<comment type="function">
    <text evidence="1">Catalyzes the GTP-dependent ribosomal translocation step during translation elongation. During this step, the ribosome changes from the pre-translocational (PRE) to the post-translocational (POST) state as the newly formed A-site-bound peptidyl-tRNA and P-site-bound deacylated tRNA move to the P and E sites, respectively. Catalyzes the coordinated movement of the two tRNA molecules, the mRNA and conformational changes in the ribosome.</text>
</comment>
<comment type="subcellular location">
    <subcellularLocation>
        <location evidence="1">Cytoplasm</location>
    </subcellularLocation>
</comment>
<comment type="similarity">
    <text evidence="1">Belongs to the TRAFAC class translation factor GTPase superfamily. Classic translation factor GTPase family. EF-G/EF-2 subfamily.</text>
</comment>
<reference key="1">
    <citation type="submission" date="2008-03" db="EMBL/GenBank/DDBJ databases">
        <title>Complete sequence of chromosome of Methylobacterium radiotolerans JCM 2831.</title>
        <authorList>
            <consortium name="US DOE Joint Genome Institute"/>
            <person name="Copeland A."/>
            <person name="Lucas S."/>
            <person name="Lapidus A."/>
            <person name="Glavina del Rio T."/>
            <person name="Dalin E."/>
            <person name="Tice H."/>
            <person name="Bruce D."/>
            <person name="Goodwin L."/>
            <person name="Pitluck S."/>
            <person name="Kiss H."/>
            <person name="Brettin T."/>
            <person name="Detter J.C."/>
            <person name="Han C."/>
            <person name="Kuske C.R."/>
            <person name="Schmutz J."/>
            <person name="Larimer F."/>
            <person name="Land M."/>
            <person name="Hauser L."/>
            <person name="Kyrpides N."/>
            <person name="Mikhailova N."/>
            <person name="Marx C.J."/>
            <person name="Richardson P."/>
        </authorList>
    </citation>
    <scope>NUCLEOTIDE SEQUENCE [LARGE SCALE GENOMIC DNA]</scope>
    <source>
        <strain>ATCC 27329 / DSM 1819 / JCM 2831 / NBRC 15690 / NCIMB 10815 / 0-1</strain>
    </source>
</reference>
<name>EFG_METRJ</name>